<gene>
    <name evidence="1" type="primary">epmA</name>
    <name type="synonym">yjeA</name>
    <name type="ordered locus">ECUMN_4691</name>
</gene>
<keyword id="KW-0067">ATP-binding</keyword>
<keyword id="KW-0436">Ligase</keyword>
<keyword id="KW-0547">Nucleotide-binding</keyword>
<protein>
    <recommendedName>
        <fullName evidence="1">Elongation factor P--(R)-beta-lysine ligase</fullName>
        <shortName evidence="1">EF-P--(R)-beta-lysine ligase</shortName>
        <ecNumber evidence="1">6.3.2.-</ecNumber>
    </recommendedName>
    <alternativeName>
        <fullName evidence="1">EF-P post-translational modification enzyme A</fullName>
    </alternativeName>
    <alternativeName>
        <fullName evidence="1">EF-P-lysine lysyltransferase</fullName>
    </alternativeName>
</protein>
<name>EPMA_ECOLU</name>
<accession>B7NG94</accession>
<feature type="chain" id="PRO_1000199257" description="Elongation factor P--(R)-beta-lysine ligase">
    <location>
        <begin position="1"/>
        <end position="325"/>
    </location>
</feature>
<feature type="binding site" evidence="1">
    <location>
        <begin position="76"/>
        <end position="78"/>
    </location>
    <ligand>
        <name>substrate</name>
    </ligand>
</feature>
<feature type="binding site" evidence="1">
    <location>
        <begin position="100"/>
        <end position="102"/>
    </location>
    <ligand>
        <name>ATP</name>
        <dbReference type="ChEBI" id="CHEBI:30616"/>
    </ligand>
</feature>
<feature type="binding site" evidence="1">
    <location>
        <position position="109"/>
    </location>
    <ligand>
        <name>ATP</name>
        <dbReference type="ChEBI" id="CHEBI:30616"/>
    </ligand>
</feature>
<feature type="binding site" evidence="1">
    <location>
        <position position="118"/>
    </location>
    <ligand>
        <name>substrate</name>
    </ligand>
</feature>
<feature type="binding site" evidence="1">
    <location>
        <begin position="244"/>
        <end position="245"/>
    </location>
    <ligand>
        <name>ATP</name>
        <dbReference type="ChEBI" id="CHEBI:30616"/>
    </ligand>
</feature>
<feature type="binding site" evidence="1">
    <location>
        <position position="251"/>
    </location>
    <ligand>
        <name>substrate</name>
    </ligand>
</feature>
<feature type="binding site" evidence="1">
    <location>
        <position position="300"/>
    </location>
    <ligand>
        <name>ATP</name>
        <dbReference type="ChEBI" id="CHEBI:30616"/>
    </ligand>
</feature>
<dbReference type="EC" id="6.3.2.-" evidence="1"/>
<dbReference type="EMBL" id="CU928163">
    <property type="protein sequence ID" value="CAR15806.1"/>
    <property type="molecule type" value="Genomic_DNA"/>
</dbReference>
<dbReference type="RefSeq" id="WP_000004771.1">
    <property type="nucleotide sequence ID" value="NC_011751.1"/>
</dbReference>
<dbReference type="RefSeq" id="YP_002415290.1">
    <property type="nucleotide sequence ID" value="NC_011751.1"/>
</dbReference>
<dbReference type="SMR" id="B7NG94"/>
<dbReference type="STRING" id="585056.ECUMN_4691"/>
<dbReference type="GeneID" id="93777667"/>
<dbReference type="KEGG" id="eum:ECUMN_4691"/>
<dbReference type="PATRIC" id="fig|585056.7.peg.4856"/>
<dbReference type="HOGENOM" id="CLU_008255_1_1_6"/>
<dbReference type="Proteomes" id="UP000007097">
    <property type="component" value="Chromosome"/>
</dbReference>
<dbReference type="GO" id="GO:0005829">
    <property type="term" value="C:cytosol"/>
    <property type="evidence" value="ECO:0007669"/>
    <property type="project" value="TreeGrafter"/>
</dbReference>
<dbReference type="GO" id="GO:0016880">
    <property type="term" value="F:acid-ammonia (or amide) ligase activity"/>
    <property type="evidence" value="ECO:0007669"/>
    <property type="project" value="UniProtKB-UniRule"/>
</dbReference>
<dbReference type="GO" id="GO:0005524">
    <property type="term" value="F:ATP binding"/>
    <property type="evidence" value="ECO:0007669"/>
    <property type="project" value="UniProtKB-UniRule"/>
</dbReference>
<dbReference type="GO" id="GO:0004824">
    <property type="term" value="F:lysine-tRNA ligase activity"/>
    <property type="evidence" value="ECO:0007669"/>
    <property type="project" value="InterPro"/>
</dbReference>
<dbReference type="GO" id="GO:0000049">
    <property type="term" value="F:tRNA binding"/>
    <property type="evidence" value="ECO:0007669"/>
    <property type="project" value="TreeGrafter"/>
</dbReference>
<dbReference type="GO" id="GO:0006430">
    <property type="term" value="P:lysyl-tRNA aminoacylation"/>
    <property type="evidence" value="ECO:0007669"/>
    <property type="project" value="InterPro"/>
</dbReference>
<dbReference type="FunFam" id="3.30.930.10:FF:000017">
    <property type="entry name" value="Elongation factor P--(R)-beta-lysine ligase"/>
    <property type="match status" value="1"/>
</dbReference>
<dbReference type="Gene3D" id="3.30.930.10">
    <property type="entry name" value="Bira Bifunctional Protein, Domain 2"/>
    <property type="match status" value="1"/>
</dbReference>
<dbReference type="HAMAP" id="MF_00174">
    <property type="entry name" value="EF_P_modif_A"/>
    <property type="match status" value="1"/>
</dbReference>
<dbReference type="InterPro" id="IPR004364">
    <property type="entry name" value="Aa-tRNA-synt_II"/>
</dbReference>
<dbReference type="InterPro" id="IPR006195">
    <property type="entry name" value="aa-tRNA-synth_II"/>
</dbReference>
<dbReference type="InterPro" id="IPR045864">
    <property type="entry name" value="aa-tRNA-synth_II/BPL/LPL"/>
</dbReference>
<dbReference type="InterPro" id="IPR004525">
    <property type="entry name" value="EpmA"/>
</dbReference>
<dbReference type="InterPro" id="IPR018149">
    <property type="entry name" value="Lys-tRNA-synth_II_C"/>
</dbReference>
<dbReference type="NCBIfam" id="TIGR00462">
    <property type="entry name" value="genX"/>
    <property type="match status" value="1"/>
</dbReference>
<dbReference type="NCBIfam" id="NF006828">
    <property type="entry name" value="PRK09350.1"/>
    <property type="match status" value="1"/>
</dbReference>
<dbReference type="PANTHER" id="PTHR42918:SF6">
    <property type="entry name" value="ELONGATION FACTOR P--(R)-BETA-LYSINE LIGASE"/>
    <property type="match status" value="1"/>
</dbReference>
<dbReference type="PANTHER" id="PTHR42918">
    <property type="entry name" value="LYSYL-TRNA SYNTHETASE"/>
    <property type="match status" value="1"/>
</dbReference>
<dbReference type="Pfam" id="PF00152">
    <property type="entry name" value="tRNA-synt_2"/>
    <property type="match status" value="1"/>
</dbReference>
<dbReference type="PRINTS" id="PR00982">
    <property type="entry name" value="TRNASYNTHLYS"/>
</dbReference>
<dbReference type="SUPFAM" id="SSF55681">
    <property type="entry name" value="Class II aaRS and biotin synthetases"/>
    <property type="match status" value="1"/>
</dbReference>
<dbReference type="PROSITE" id="PS50862">
    <property type="entry name" value="AA_TRNA_LIGASE_II"/>
    <property type="match status" value="1"/>
</dbReference>
<organism>
    <name type="scientific">Escherichia coli O17:K52:H18 (strain UMN026 / ExPEC)</name>
    <dbReference type="NCBI Taxonomy" id="585056"/>
    <lineage>
        <taxon>Bacteria</taxon>
        <taxon>Pseudomonadati</taxon>
        <taxon>Pseudomonadota</taxon>
        <taxon>Gammaproteobacteria</taxon>
        <taxon>Enterobacterales</taxon>
        <taxon>Enterobacteriaceae</taxon>
        <taxon>Escherichia</taxon>
    </lineage>
</organism>
<sequence>MSETASWQPSASIPNLLKRAAIMAEIRRFFADRGVLEVETPCMSQATVTDIHLVPFETRFVGPGHSQGMNLWLMTSPEYHMKRLLVAGCGPVFQLCRSFRNEEMGRYHNPEFTMLEWYRPHYDMYRLMNEVDDLLQQVLDCPAAESLSYQQAFLRYLEIDPLSADKTQLREVAAKLDLSNVADTEEDRDTLLQLLFTFGVEPNIGKEKPTFVYHFPASQASLAQISTEDHRVAERFEVYYKGIELANGFHELTDAREQQQRFEQDNRKRAARGLPQHPIDQNLIEALKVGMPDCSGVALGVDRLVMLALGAETLAEVIAFSVDRA</sequence>
<proteinExistence type="inferred from homology"/>
<reference key="1">
    <citation type="journal article" date="2009" name="PLoS Genet.">
        <title>Organised genome dynamics in the Escherichia coli species results in highly diverse adaptive paths.</title>
        <authorList>
            <person name="Touchon M."/>
            <person name="Hoede C."/>
            <person name="Tenaillon O."/>
            <person name="Barbe V."/>
            <person name="Baeriswyl S."/>
            <person name="Bidet P."/>
            <person name="Bingen E."/>
            <person name="Bonacorsi S."/>
            <person name="Bouchier C."/>
            <person name="Bouvet O."/>
            <person name="Calteau A."/>
            <person name="Chiapello H."/>
            <person name="Clermont O."/>
            <person name="Cruveiller S."/>
            <person name="Danchin A."/>
            <person name="Diard M."/>
            <person name="Dossat C."/>
            <person name="Karoui M.E."/>
            <person name="Frapy E."/>
            <person name="Garry L."/>
            <person name="Ghigo J.M."/>
            <person name="Gilles A.M."/>
            <person name="Johnson J."/>
            <person name="Le Bouguenec C."/>
            <person name="Lescat M."/>
            <person name="Mangenot S."/>
            <person name="Martinez-Jehanne V."/>
            <person name="Matic I."/>
            <person name="Nassif X."/>
            <person name="Oztas S."/>
            <person name="Petit M.A."/>
            <person name="Pichon C."/>
            <person name="Rouy Z."/>
            <person name="Ruf C.S."/>
            <person name="Schneider D."/>
            <person name="Tourret J."/>
            <person name="Vacherie B."/>
            <person name="Vallenet D."/>
            <person name="Medigue C."/>
            <person name="Rocha E.P.C."/>
            <person name="Denamur E."/>
        </authorList>
    </citation>
    <scope>NUCLEOTIDE SEQUENCE [LARGE SCALE GENOMIC DNA]</scope>
    <source>
        <strain>UMN026 / ExPEC</strain>
    </source>
</reference>
<comment type="function">
    <text evidence="1">With EpmB is involved in the beta-lysylation step of the post-translational modification of translation elongation factor P (EF-P) on 'Lys-34'. Catalyzes the ATP-dependent activation of (R)-beta-lysine produced by EpmB, forming a lysyl-adenylate, from which the beta-lysyl moiety is then transferred to the epsilon-amino group of EF-P 'Lys-34'.</text>
</comment>
<comment type="catalytic activity">
    <reaction evidence="1">
        <text>D-beta-lysine + L-lysyl-[protein] + ATP = N(6)-((3R)-3,6-diaminohexanoyl)-L-lysyl-[protein] + AMP + diphosphate + H(+)</text>
        <dbReference type="Rhea" id="RHEA:83435"/>
        <dbReference type="Rhea" id="RHEA-COMP:9752"/>
        <dbReference type="Rhea" id="RHEA-COMP:20131"/>
        <dbReference type="ChEBI" id="CHEBI:15378"/>
        <dbReference type="ChEBI" id="CHEBI:29969"/>
        <dbReference type="ChEBI" id="CHEBI:30616"/>
        <dbReference type="ChEBI" id="CHEBI:33019"/>
        <dbReference type="ChEBI" id="CHEBI:84138"/>
        <dbReference type="ChEBI" id="CHEBI:156053"/>
        <dbReference type="ChEBI" id="CHEBI:456215"/>
    </reaction>
    <physiologicalReaction direction="left-to-right" evidence="1">
        <dbReference type="Rhea" id="RHEA:83436"/>
    </physiologicalReaction>
</comment>
<comment type="subunit">
    <text evidence="1">Homodimer.</text>
</comment>
<comment type="similarity">
    <text evidence="1">Belongs to the class-II aminoacyl-tRNA synthetase family. EpmA subfamily.</text>
</comment>
<evidence type="ECO:0000255" key="1">
    <source>
        <dbReference type="HAMAP-Rule" id="MF_00174"/>
    </source>
</evidence>